<evidence type="ECO:0000255" key="1">
    <source>
        <dbReference type="HAMAP-Rule" id="MF_01528"/>
    </source>
</evidence>
<feature type="chain" id="PRO_1000200790" description="Multidrug resistance protein MdtG">
    <location>
        <begin position="1"/>
        <end position="404"/>
    </location>
</feature>
<feature type="transmembrane region" description="Helical" evidence="1">
    <location>
        <begin position="19"/>
        <end position="39"/>
    </location>
</feature>
<feature type="transmembrane region" description="Helical" evidence="1">
    <location>
        <begin position="56"/>
        <end position="76"/>
    </location>
</feature>
<feature type="transmembrane region" description="Helical" evidence="1">
    <location>
        <begin position="90"/>
        <end position="110"/>
    </location>
</feature>
<feature type="transmembrane region" description="Helical" evidence="1">
    <location>
        <begin position="113"/>
        <end position="133"/>
    </location>
</feature>
<feature type="transmembrane region" description="Helical" evidence="1">
    <location>
        <begin position="144"/>
        <end position="164"/>
    </location>
</feature>
<feature type="transmembrane region" description="Helical" evidence="1">
    <location>
        <begin position="171"/>
        <end position="191"/>
    </location>
</feature>
<feature type="transmembrane region" description="Helical" evidence="1">
    <location>
        <begin position="222"/>
        <end position="242"/>
    </location>
</feature>
<feature type="transmembrane region" description="Helical" evidence="1">
    <location>
        <begin position="254"/>
        <end position="274"/>
    </location>
</feature>
<feature type="transmembrane region" description="Helical" evidence="1">
    <location>
        <begin position="288"/>
        <end position="308"/>
    </location>
</feature>
<feature type="transmembrane region" description="Helical" evidence="1">
    <location>
        <begin position="317"/>
        <end position="337"/>
    </location>
</feature>
<feature type="transmembrane region" description="Helical" evidence="1">
    <location>
        <begin position="376"/>
        <end position="396"/>
    </location>
</feature>
<proteinExistence type="inferred from homology"/>
<reference key="1">
    <citation type="journal article" date="2011" name="J. Bacteriol.">
        <title>Comparative genomics of 28 Salmonella enterica isolates: evidence for CRISPR-mediated adaptive sublineage evolution.</title>
        <authorList>
            <person name="Fricke W.F."/>
            <person name="Mammel M.K."/>
            <person name="McDermott P.F."/>
            <person name="Tartera C."/>
            <person name="White D.G."/>
            <person name="Leclerc J.E."/>
            <person name="Ravel J."/>
            <person name="Cebula T.A."/>
        </authorList>
    </citation>
    <scope>NUCLEOTIDE SEQUENCE [LARGE SCALE GENOMIC DNA]</scope>
    <source>
        <strain>SL476</strain>
    </source>
</reference>
<accession>B4TES5</accession>
<protein>
    <recommendedName>
        <fullName evidence="1">Multidrug resistance protein MdtG</fullName>
    </recommendedName>
</protein>
<keyword id="KW-0997">Cell inner membrane</keyword>
<keyword id="KW-1003">Cell membrane</keyword>
<keyword id="KW-0472">Membrane</keyword>
<keyword id="KW-0812">Transmembrane</keyword>
<keyword id="KW-1133">Transmembrane helix</keyword>
<keyword id="KW-0813">Transport</keyword>
<sequence>MSPSDVPINWKRNLTVTWLGCFLTGAAFSLVMPFLPLYVEQLGVTGHSALNMWSGLVFSITFLFSAIASPFWGGLADRKGRKIMLLRSALGMAIVMLLMGMAQNIWQFLILRALLGLLGGFIPNANALIATQVPRHKSGWALGTLSTGGVSGALLGPLAGGLLADHYGLRPVFFITASVLFICFLLTFFFIRENFLPVSKKEMLHVREVVASLKNPRLVLSLFVTTLIIQVATGSIAPILTLYVRELAGNVSNIAFISGMIASVPGVAALLSAPRLGKLGDRIGPEKILIVALIISVLLLIPMSFVQTPWQLALLRFLLGAADGALLPAVQTLLVYNSTNQIAGRIFSYNQSFRDIGNVTGPLMGAAISASYDFRAVFCVTAGVVLFNAIYSWNSLRRRRLAIE</sequence>
<dbReference type="EMBL" id="CP001120">
    <property type="protein sequence ID" value="ACF65862.1"/>
    <property type="molecule type" value="Genomic_DNA"/>
</dbReference>
<dbReference type="RefSeq" id="WP_000075052.1">
    <property type="nucleotide sequence ID" value="NC_011083.1"/>
</dbReference>
<dbReference type="SMR" id="B4TES5"/>
<dbReference type="KEGG" id="seh:SeHA_C1265"/>
<dbReference type="HOGENOM" id="CLU_001265_57_3_6"/>
<dbReference type="Proteomes" id="UP000001866">
    <property type="component" value="Chromosome"/>
</dbReference>
<dbReference type="GO" id="GO:0005886">
    <property type="term" value="C:plasma membrane"/>
    <property type="evidence" value="ECO:0007669"/>
    <property type="project" value="UniProtKB-SubCell"/>
</dbReference>
<dbReference type="GO" id="GO:0022857">
    <property type="term" value="F:transmembrane transporter activity"/>
    <property type="evidence" value="ECO:0007669"/>
    <property type="project" value="UniProtKB-UniRule"/>
</dbReference>
<dbReference type="CDD" id="cd17391">
    <property type="entry name" value="MFS_MdtG_MDR_like"/>
    <property type="match status" value="1"/>
</dbReference>
<dbReference type="FunFam" id="1.20.1250.20:FF:000020">
    <property type="entry name" value="Multidrug resistance protein MdtG"/>
    <property type="match status" value="1"/>
</dbReference>
<dbReference type="FunFam" id="1.20.1250.20:FF:000022">
    <property type="entry name" value="Multidrug resistance protein MdtG"/>
    <property type="match status" value="1"/>
</dbReference>
<dbReference type="Gene3D" id="1.20.1250.20">
    <property type="entry name" value="MFS general substrate transporter like domains"/>
    <property type="match status" value="2"/>
</dbReference>
<dbReference type="HAMAP" id="MF_01528">
    <property type="entry name" value="MFS_MdtG"/>
    <property type="match status" value="1"/>
</dbReference>
<dbReference type="InterPro" id="IPR011701">
    <property type="entry name" value="MFS"/>
</dbReference>
<dbReference type="InterPro" id="IPR020846">
    <property type="entry name" value="MFS_dom"/>
</dbReference>
<dbReference type="InterPro" id="IPR050497">
    <property type="entry name" value="MFS_MdtG_subfamily"/>
</dbReference>
<dbReference type="InterPro" id="IPR005828">
    <property type="entry name" value="MFS_sugar_transport-like"/>
</dbReference>
<dbReference type="InterPro" id="IPR036259">
    <property type="entry name" value="MFS_trans_sf"/>
</dbReference>
<dbReference type="InterPro" id="IPR023692">
    <property type="entry name" value="Mutidrug-R_MdtG"/>
</dbReference>
<dbReference type="InterPro" id="IPR001958">
    <property type="entry name" value="Tet-R_TetA/multi-R_MdtG-like"/>
</dbReference>
<dbReference type="NCBIfam" id="NF007372">
    <property type="entry name" value="PRK09874.1"/>
    <property type="match status" value="1"/>
</dbReference>
<dbReference type="PANTHER" id="PTHR43414">
    <property type="entry name" value="MULTIDRUG RESISTANCE PROTEIN MDTG"/>
    <property type="match status" value="1"/>
</dbReference>
<dbReference type="PANTHER" id="PTHR43414:SF6">
    <property type="entry name" value="MULTIDRUG RESISTANCE PROTEIN MDTG"/>
    <property type="match status" value="1"/>
</dbReference>
<dbReference type="Pfam" id="PF07690">
    <property type="entry name" value="MFS_1"/>
    <property type="match status" value="1"/>
</dbReference>
<dbReference type="Pfam" id="PF00083">
    <property type="entry name" value="Sugar_tr"/>
    <property type="match status" value="1"/>
</dbReference>
<dbReference type="PRINTS" id="PR01035">
    <property type="entry name" value="TCRTETA"/>
</dbReference>
<dbReference type="SUPFAM" id="SSF103473">
    <property type="entry name" value="MFS general substrate transporter"/>
    <property type="match status" value="2"/>
</dbReference>
<dbReference type="PROSITE" id="PS50850">
    <property type="entry name" value="MFS"/>
    <property type="match status" value="1"/>
</dbReference>
<organism>
    <name type="scientific">Salmonella heidelberg (strain SL476)</name>
    <dbReference type="NCBI Taxonomy" id="454169"/>
    <lineage>
        <taxon>Bacteria</taxon>
        <taxon>Pseudomonadati</taxon>
        <taxon>Pseudomonadota</taxon>
        <taxon>Gammaproteobacteria</taxon>
        <taxon>Enterobacterales</taxon>
        <taxon>Enterobacteriaceae</taxon>
        <taxon>Salmonella</taxon>
    </lineage>
</organism>
<name>MDTG_SALHS</name>
<comment type="subcellular location">
    <subcellularLocation>
        <location evidence="1">Cell inner membrane</location>
        <topology evidence="1">Multi-pass membrane protein</topology>
    </subcellularLocation>
</comment>
<comment type="similarity">
    <text evidence="1">Belongs to the major facilitator superfamily. DHA1 family. MdtG (TC 2.A.1.2.20) subfamily.</text>
</comment>
<gene>
    <name evidence="1" type="primary">mdtG</name>
    <name type="ordered locus">SeHA_C1265</name>
</gene>